<protein>
    <recommendedName>
        <fullName>Arylsulfatase K</fullName>
        <shortName>ASK</shortName>
        <ecNumber evidence="2">3.1.6.1</ecNumber>
    </recommendedName>
    <alternativeName>
        <fullName>Glucuronate-2-sulfatase</fullName>
        <ecNumber evidence="2">3.1.6.18</ecNumber>
    </alternativeName>
</protein>
<dbReference type="EC" id="3.1.6.1" evidence="2"/>
<dbReference type="EC" id="3.1.6.18" evidence="2"/>
<dbReference type="EMBL" id="BC124212">
    <property type="protein sequence ID" value="AAI24213.1"/>
    <property type="molecule type" value="mRNA"/>
</dbReference>
<dbReference type="RefSeq" id="NP_001070625.1">
    <property type="nucleotide sequence ID" value="NM_001077157.1"/>
</dbReference>
<dbReference type="SMR" id="Q08CJ7"/>
<dbReference type="FunCoup" id="Q08CJ7">
    <property type="interactions" value="11"/>
</dbReference>
<dbReference type="STRING" id="7955.ENSDARP00000077752"/>
<dbReference type="GlyCosmos" id="Q08CJ7">
    <property type="glycosylation" value="3 sites, No reported glycans"/>
</dbReference>
<dbReference type="PaxDb" id="7955-ENSDARP00000077752"/>
<dbReference type="GeneID" id="562412"/>
<dbReference type="KEGG" id="dre:562412"/>
<dbReference type="AGR" id="ZFIN:ZDB-GENE-060929-332"/>
<dbReference type="CTD" id="153642"/>
<dbReference type="ZFIN" id="ZDB-GENE-060929-332">
    <property type="gene designation" value="arsk"/>
</dbReference>
<dbReference type="eggNOG" id="KOG3731">
    <property type="taxonomic scope" value="Eukaryota"/>
</dbReference>
<dbReference type="InParanoid" id="Q08CJ7"/>
<dbReference type="OrthoDB" id="1886626at2759"/>
<dbReference type="PhylomeDB" id="Q08CJ7"/>
<dbReference type="PRO" id="PR:Q08CJ7"/>
<dbReference type="Proteomes" id="UP000000437">
    <property type="component" value="Alternate scaffold 5"/>
</dbReference>
<dbReference type="Proteomes" id="UP000000437">
    <property type="component" value="Chromosome 5"/>
</dbReference>
<dbReference type="GO" id="GO:0005576">
    <property type="term" value="C:extracellular region"/>
    <property type="evidence" value="ECO:0000250"/>
    <property type="project" value="UniProtKB"/>
</dbReference>
<dbReference type="GO" id="GO:0005764">
    <property type="term" value="C:lysosome"/>
    <property type="evidence" value="ECO:0000250"/>
    <property type="project" value="UniProtKB"/>
</dbReference>
<dbReference type="GO" id="GO:0004065">
    <property type="term" value="F:arylsulfatase activity"/>
    <property type="evidence" value="ECO:0000250"/>
    <property type="project" value="UniProtKB"/>
</dbReference>
<dbReference type="GO" id="GO:0015024">
    <property type="term" value="F:glucuronate-2-sulfatase activity"/>
    <property type="evidence" value="ECO:0000250"/>
    <property type="project" value="UniProtKB"/>
</dbReference>
<dbReference type="GO" id="GO:0046872">
    <property type="term" value="F:metal ion binding"/>
    <property type="evidence" value="ECO:0007669"/>
    <property type="project" value="UniProtKB-KW"/>
</dbReference>
<dbReference type="CDD" id="cd16171">
    <property type="entry name" value="ARSK"/>
    <property type="match status" value="1"/>
</dbReference>
<dbReference type="FunFam" id="3.40.720.10:FF:000039">
    <property type="entry name" value="arylsulfatase K"/>
    <property type="match status" value="1"/>
</dbReference>
<dbReference type="Gene3D" id="3.40.720.10">
    <property type="entry name" value="Alkaline Phosphatase, subunit A"/>
    <property type="match status" value="1"/>
</dbReference>
<dbReference type="InterPro" id="IPR017850">
    <property type="entry name" value="Alkaline_phosphatase_core_sf"/>
</dbReference>
<dbReference type="InterPro" id="IPR047892">
    <property type="entry name" value="ARSK"/>
</dbReference>
<dbReference type="InterPro" id="IPR051849">
    <property type="entry name" value="GAG-degrading_sulfatase"/>
</dbReference>
<dbReference type="InterPro" id="IPR000917">
    <property type="entry name" value="Sulfatase_N"/>
</dbReference>
<dbReference type="PANTHER" id="PTHR46615">
    <property type="entry name" value="ARYLSULFATASE K"/>
    <property type="match status" value="1"/>
</dbReference>
<dbReference type="PANTHER" id="PTHR46615:SF1">
    <property type="entry name" value="ARYLSULFATASE K"/>
    <property type="match status" value="1"/>
</dbReference>
<dbReference type="Pfam" id="PF00884">
    <property type="entry name" value="Sulfatase"/>
    <property type="match status" value="1"/>
</dbReference>
<dbReference type="SUPFAM" id="SSF53649">
    <property type="entry name" value="Alkaline phosphatase-like"/>
    <property type="match status" value="1"/>
</dbReference>
<name>ARSK_DANRE</name>
<evidence type="ECO:0000250" key="1">
    <source>
        <dbReference type="UniProtKB" id="P15289"/>
    </source>
</evidence>
<evidence type="ECO:0000250" key="2">
    <source>
        <dbReference type="UniProtKB" id="Q6UWY0"/>
    </source>
</evidence>
<evidence type="ECO:0000255" key="3"/>
<evidence type="ECO:0000305" key="4"/>
<feature type="signal peptide" evidence="3">
    <location>
        <begin position="1"/>
        <end position="16"/>
    </location>
</feature>
<feature type="chain" id="PRO_0000356289" description="Arylsulfatase K">
    <location>
        <begin position="17"/>
        <end position="523"/>
    </location>
</feature>
<feature type="active site" description="Nucleophile" evidence="1">
    <location>
        <position position="75"/>
    </location>
</feature>
<feature type="binding site" evidence="1">
    <location>
        <position position="35"/>
    </location>
    <ligand>
        <name>Ca(2+)</name>
        <dbReference type="ChEBI" id="CHEBI:29108"/>
    </ligand>
</feature>
<feature type="binding site" description="via 3-oxoalanine" evidence="1">
    <location>
        <position position="75"/>
    </location>
    <ligand>
        <name>Ca(2+)</name>
        <dbReference type="ChEBI" id="CHEBI:29108"/>
    </ligand>
</feature>
<feature type="binding site" evidence="1">
    <location>
        <position position="123"/>
    </location>
    <ligand>
        <name>substrate</name>
    </ligand>
</feature>
<feature type="binding site" evidence="1">
    <location>
        <position position="246"/>
    </location>
    <ligand>
        <name>substrate</name>
    </ligand>
</feature>
<feature type="binding site" evidence="1">
    <location>
        <position position="308"/>
    </location>
    <ligand>
        <name>Ca(2+)</name>
        <dbReference type="ChEBI" id="CHEBI:29108"/>
    </ligand>
</feature>
<feature type="binding site" evidence="1">
    <location>
        <position position="309"/>
    </location>
    <ligand>
        <name>Ca(2+)</name>
        <dbReference type="ChEBI" id="CHEBI:29108"/>
    </ligand>
</feature>
<feature type="modified residue" description="3-oxoalanine (Cys)" evidence="2">
    <location>
        <position position="75"/>
    </location>
</feature>
<feature type="glycosylation site" description="N-linked (GlcNAc...) asparagine" evidence="3">
    <location>
        <position position="103"/>
    </location>
</feature>
<feature type="glycosylation site" description="N-linked (GlcNAc...) asparagine" evidence="3">
    <location>
        <position position="257"/>
    </location>
</feature>
<feature type="glycosylation site" description="N-linked (GlcNAc...) asparagine" evidence="3">
    <location>
        <position position="405"/>
    </location>
</feature>
<accession>Q08CJ7</accession>
<reference key="1">
    <citation type="submission" date="2006-09" db="EMBL/GenBank/DDBJ databases">
        <authorList>
            <consortium name="NIH - Zebrafish Gene Collection (ZGC) project"/>
        </authorList>
    </citation>
    <scope>NUCLEOTIDE SEQUENCE [LARGE SCALE MRNA]</scope>
    <source>
        <tissue>Brain</tissue>
    </source>
</reference>
<organism>
    <name type="scientific">Danio rerio</name>
    <name type="common">Zebrafish</name>
    <name type="synonym">Brachydanio rerio</name>
    <dbReference type="NCBI Taxonomy" id="7955"/>
    <lineage>
        <taxon>Eukaryota</taxon>
        <taxon>Metazoa</taxon>
        <taxon>Chordata</taxon>
        <taxon>Craniata</taxon>
        <taxon>Vertebrata</taxon>
        <taxon>Euteleostomi</taxon>
        <taxon>Actinopterygii</taxon>
        <taxon>Neopterygii</taxon>
        <taxon>Teleostei</taxon>
        <taxon>Ostariophysi</taxon>
        <taxon>Cypriniformes</taxon>
        <taxon>Danionidae</taxon>
        <taxon>Danioninae</taxon>
        <taxon>Danio</taxon>
    </lineage>
</organism>
<keyword id="KW-0106">Calcium</keyword>
<keyword id="KW-0325">Glycoprotein</keyword>
<keyword id="KW-0378">Hydrolase</keyword>
<keyword id="KW-0458">Lysosome</keyword>
<keyword id="KW-0479">Metal-binding</keyword>
<keyword id="KW-1185">Reference proteome</keyword>
<keyword id="KW-0964">Secreted</keyword>
<keyword id="KW-0732">Signal</keyword>
<sequence length="523" mass="59499">MLRVFVLLIFNVNAYCMYLNWTSHDRPNIVMIMSDAFDGRLTFQPGNKVVQLPYINYMRELGSVFLNSYTNSPICCPSRAAMWSGQFVHLTQSWNNNKCLHPNATTWMDDLRKSGYHTHSMGKLDYTSGHHSVSNRVEAWTRDVPFLLRQEGRPVTDLVGDASTKRVMIKDWTITDAAVQWIRNTTASLTQPFALYLGLNLPHPYRTDSLGPTAGGSTFRTSPYWLNKVSYNQVSVPKWLRFKDMHPVDYYSTVTKNCSGHFTEEEIRNIRAFYYAMCAETDGMLGEVMAALRDTGSLNKTVVLFTSDHGDLAMEHRQFYKMSMFEGSSHVPLLIMGPGVKSGFEVSLPVSLVDIYPTVLDLAGVPQTGGLSGHSLIPLISRVSIHSAEPHPAWAFSEYHGCNANTSTYMLRIAEWKYIAYADGLNVPPQLFNLSKDESELRNIASQFPDVCQDLDKLLRSIVDYPSVSKSVHRYNKQQFLEWKQSLGDSYSQVIASLRWHVDWKKDAKSYERDIDEWLLGLD</sequence>
<gene>
    <name type="primary">arsk</name>
    <name type="ORF">zgc:153019</name>
</gene>
<proteinExistence type="evidence at transcript level"/>
<comment type="function">
    <text evidence="2">Catalyzes the hydrolysis of pseudosubstrates such as p-nitrocatechol sulfate and p-nitrophenyl sulfate (By similarity). Catalyzes the hydrolysis of the 2-sulfate groups of the 2-O-sulfo-D-glucuronate residues of chondroitin sulfate, heparin and heparitin sulfate (By similarity). Acts selectively on 2-sulfoglucuronate and lacks activity against 2-sulfoiduronate (By similarity).</text>
</comment>
<comment type="catalytic activity">
    <reaction evidence="2">
        <text>an aryl sulfate + H2O = a phenol + sulfate + H(+)</text>
        <dbReference type="Rhea" id="RHEA:17261"/>
        <dbReference type="ChEBI" id="CHEBI:15377"/>
        <dbReference type="ChEBI" id="CHEBI:15378"/>
        <dbReference type="ChEBI" id="CHEBI:16189"/>
        <dbReference type="ChEBI" id="CHEBI:33853"/>
        <dbReference type="ChEBI" id="CHEBI:140317"/>
        <dbReference type="EC" id="3.1.6.1"/>
    </reaction>
</comment>
<comment type="catalytic activity">
    <reaction evidence="2">
        <text>Hydrolysis of the 2-sulfate groups of the 2-O-sulfo-D-glucuronate residues of chondroitin sulfate, heparin and heparitin sulfate.</text>
        <dbReference type="EC" id="3.1.6.18"/>
    </reaction>
</comment>
<comment type="cofactor">
    <cofactor evidence="1">
        <name>Ca(2+)</name>
        <dbReference type="ChEBI" id="CHEBI:29108"/>
    </cofactor>
    <text evidence="1">Binds 1 Ca(2+) ion per subunit.</text>
</comment>
<comment type="subcellular location">
    <subcellularLocation>
        <location evidence="2">Secreted</location>
    </subcellularLocation>
    <subcellularLocation>
        <location evidence="2">Lysosome</location>
    </subcellularLocation>
</comment>
<comment type="PTM">
    <text evidence="2">The conversion to 3-oxoalanine (also known as C-formylglycine, FGly), of a serine or cysteine residue in prokaryotes and of a cysteine residue in eukaryotes, is critical for catalytic activity.</text>
</comment>
<comment type="similarity">
    <text evidence="4">Belongs to the sulfatase family.</text>
</comment>